<organism>
    <name type="scientific">Serratia proteamaculans (strain 568)</name>
    <dbReference type="NCBI Taxonomy" id="399741"/>
    <lineage>
        <taxon>Bacteria</taxon>
        <taxon>Pseudomonadati</taxon>
        <taxon>Pseudomonadota</taxon>
        <taxon>Gammaproteobacteria</taxon>
        <taxon>Enterobacterales</taxon>
        <taxon>Yersiniaceae</taxon>
        <taxon>Serratia</taxon>
    </lineage>
</organism>
<reference key="1">
    <citation type="submission" date="2007-09" db="EMBL/GenBank/DDBJ databases">
        <title>Complete sequence of chromosome of Serratia proteamaculans 568.</title>
        <authorList>
            <consortium name="US DOE Joint Genome Institute"/>
            <person name="Copeland A."/>
            <person name="Lucas S."/>
            <person name="Lapidus A."/>
            <person name="Barry K."/>
            <person name="Glavina del Rio T."/>
            <person name="Dalin E."/>
            <person name="Tice H."/>
            <person name="Pitluck S."/>
            <person name="Chain P."/>
            <person name="Malfatti S."/>
            <person name="Shin M."/>
            <person name="Vergez L."/>
            <person name="Schmutz J."/>
            <person name="Larimer F."/>
            <person name="Land M."/>
            <person name="Hauser L."/>
            <person name="Kyrpides N."/>
            <person name="Kim E."/>
            <person name="Taghavi S."/>
            <person name="Newman L."/>
            <person name="Vangronsveld J."/>
            <person name="van der Lelie D."/>
            <person name="Richardson P."/>
        </authorList>
    </citation>
    <scope>NUCLEOTIDE SEQUENCE [LARGE SCALE GENOMIC DNA]</scope>
    <source>
        <strain>568</strain>
    </source>
</reference>
<dbReference type="EC" id="1.2.1.70" evidence="1"/>
<dbReference type="EMBL" id="CP000826">
    <property type="protein sequence ID" value="ABV41092.1"/>
    <property type="molecule type" value="Genomic_DNA"/>
</dbReference>
<dbReference type="SMR" id="A8GDA2"/>
<dbReference type="STRING" id="399741.Spro_1989"/>
<dbReference type="KEGG" id="spe:Spro_1989"/>
<dbReference type="eggNOG" id="COG0373">
    <property type="taxonomic scope" value="Bacteria"/>
</dbReference>
<dbReference type="HOGENOM" id="CLU_035113_2_2_6"/>
<dbReference type="OrthoDB" id="110209at2"/>
<dbReference type="UniPathway" id="UPA00251">
    <property type="reaction ID" value="UER00316"/>
</dbReference>
<dbReference type="GO" id="GO:0008883">
    <property type="term" value="F:glutamyl-tRNA reductase activity"/>
    <property type="evidence" value="ECO:0007669"/>
    <property type="project" value="UniProtKB-UniRule"/>
</dbReference>
<dbReference type="GO" id="GO:0050661">
    <property type="term" value="F:NADP binding"/>
    <property type="evidence" value="ECO:0007669"/>
    <property type="project" value="InterPro"/>
</dbReference>
<dbReference type="GO" id="GO:0019353">
    <property type="term" value="P:protoporphyrinogen IX biosynthetic process from glutamate"/>
    <property type="evidence" value="ECO:0007669"/>
    <property type="project" value="TreeGrafter"/>
</dbReference>
<dbReference type="CDD" id="cd05213">
    <property type="entry name" value="NAD_bind_Glutamyl_tRNA_reduct"/>
    <property type="match status" value="1"/>
</dbReference>
<dbReference type="FunFam" id="3.30.460.30:FF:000001">
    <property type="entry name" value="Glutamyl-tRNA reductase"/>
    <property type="match status" value="1"/>
</dbReference>
<dbReference type="FunFam" id="3.40.50.720:FF:000031">
    <property type="entry name" value="Glutamyl-tRNA reductase"/>
    <property type="match status" value="1"/>
</dbReference>
<dbReference type="Gene3D" id="3.30.460.30">
    <property type="entry name" value="Glutamyl-tRNA reductase, N-terminal domain"/>
    <property type="match status" value="1"/>
</dbReference>
<dbReference type="Gene3D" id="3.40.50.720">
    <property type="entry name" value="NAD(P)-binding Rossmann-like Domain"/>
    <property type="match status" value="1"/>
</dbReference>
<dbReference type="HAMAP" id="MF_00087">
    <property type="entry name" value="Glu_tRNA_reductase"/>
    <property type="match status" value="1"/>
</dbReference>
<dbReference type="InterPro" id="IPR000343">
    <property type="entry name" value="4pyrrol_synth_GluRdtase"/>
</dbReference>
<dbReference type="InterPro" id="IPR015896">
    <property type="entry name" value="4pyrrol_synth_GluRdtase_dimer"/>
</dbReference>
<dbReference type="InterPro" id="IPR015895">
    <property type="entry name" value="4pyrrol_synth_GluRdtase_N"/>
</dbReference>
<dbReference type="InterPro" id="IPR018214">
    <property type="entry name" value="GluRdtase_CS"/>
</dbReference>
<dbReference type="InterPro" id="IPR036453">
    <property type="entry name" value="GluRdtase_dimer_dom_sf"/>
</dbReference>
<dbReference type="InterPro" id="IPR036343">
    <property type="entry name" value="GluRdtase_N_sf"/>
</dbReference>
<dbReference type="InterPro" id="IPR036291">
    <property type="entry name" value="NAD(P)-bd_dom_sf"/>
</dbReference>
<dbReference type="InterPro" id="IPR006151">
    <property type="entry name" value="Shikm_DH/Glu-tRNA_Rdtase"/>
</dbReference>
<dbReference type="NCBIfam" id="TIGR01035">
    <property type="entry name" value="hemA"/>
    <property type="match status" value="1"/>
</dbReference>
<dbReference type="PANTHER" id="PTHR43013">
    <property type="entry name" value="GLUTAMYL-TRNA REDUCTASE"/>
    <property type="match status" value="1"/>
</dbReference>
<dbReference type="PANTHER" id="PTHR43013:SF1">
    <property type="entry name" value="GLUTAMYL-TRNA REDUCTASE"/>
    <property type="match status" value="1"/>
</dbReference>
<dbReference type="Pfam" id="PF00745">
    <property type="entry name" value="GlutR_dimer"/>
    <property type="match status" value="1"/>
</dbReference>
<dbReference type="Pfam" id="PF05201">
    <property type="entry name" value="GlutR_N"/>
    <property type="match status" value="1"/>
</dbReference>
<dbReference type="Pfam" id="PF01488">
    <property type="entry name" value="Shikimate_DH"/>
    <property type="match status" value="1"/>
</dbReference>
<dbReference type="PIRSF" id="PIRSF000445">
    <property type="entry name" value="4pyrrol_synth_GluRdtase"/>
    <property type="match status" value="1"/>
</dbReference>
<dbReference type="SUPFAM" id="SSF69742">
    <property type="entry name" value="Glutamyl tRNA-reductase catalytic, N-terminal domain"/>
    <property type="match status" value="1"/>
</dbReference>
<dbReference type="SUPFAM" id="SSF69075">
    <property type="entry name" value="Glutamyl tRNA-reductase dimerization domain"/>
    <property type="match status" value="1"/>
</dbReference>
<dbReference type="SUPFAM" id="SSF51735">
    <property type="entry name" value="NAD(P)-binding Rossmann-fold domains"/>
    <property type="match status" value="1"/>
</dbReference>
<dbReference type="PROSITE" id="PS00747">
    <property type="entry name" value="GLUTR"/>
    <property type="match status" value="1"/>
</dbReference>
<sequence>MTLLALGINHKTAPVSLRERVTFSPESIEQALTSLLQQPLVQGGVVLSTCNRTELYLSVEQQEHIHEQLVSWLCEYHHLRPEEVSKSLYWHHGNEAVSHLMRVASGLDSLVLGEPQILGQVKKAFAESQRGQSLSGELERLFQKSFSVAKRVRTETEIGASAVSVAFAACTLARQIFESLAELNVLLVGAGETIELVARHLREHKVRHMIIANRTRERAQLLADEVGAEVITLPEIDERLADADIIISSTASPLPIIGKGMVERALKARRNQPMLLVDIAVPRDIEPEVGKLANAYLYSVDDLHAIIQSNLAQRKAAAVQAESIVQQESINFMAWLRSQGAVETIRDYRSQADQIRAEMEAKALAAIAQGADVEQVIHELAHRLTNRLIHAPTKSLQQAAGDGDVERLQLLRDSLGLDQH</sequence>
<proteinExistence type="inferred from homology"/>
<gene>
    <name evidence="1" type="primary">hemA</name>
    <name type="ordered locus">Spro_1989</name>
</gene>
<name>HEM1_SERP5</name>
<feature type="chain" id="PRO_1000057582" description="Glutamyl-tRNA reductase">
    <location>
        <begin position="1"/>
        <end position="420"/>
    </location>
</feature>
<feature type="active site" description="Nucleophile" evidence="1">
    <location>
        <position position="50"/>
    </location>
</feature>
<feature type="binding site" evidence="1">
    <location>
        <begin position="49"/>
        <end position="52"/>
    </location>
    <ligand>
        <name>substrate</name>
    </ligand>
</feature>
<feature type="binding site" evidence="1">
    <location>
        <position position="109"/>
    </location>
    <ligand>
        <name>substrate</name>
    </ligand>
</feature>
<feature type="binding site" evidence="1">
    <location>
        <begin position="114"/>
        <end position="116"/>
    </location>
    <ligand>
        <name>substrate</name>
    </ligand>
</feature>
<feature type="binding site" evidence="1">
    <location>
        <position position="120"/>
    </location>
    <ligand>
        <name>substrate</name>
    </ligand>
</feature>
<feature type="binding site" evidence="1">
    <location>
        <begin position="189"/>
        <end position="194"/>
    </location>
    <ligand>
        <name>NADP(+)</name>
        <dbReference type="ChEBI" id="CHEBI:58349"/>
    </ligand>
</feature>
<feature type="site" description="Important for activity" evidence="1">
    <location>
        <position position="99"/>
    </location>
</feature>
<accession>A8GDA2</accession>
<evidence type="ECO:0000255" key="1">
    <source>
        <dbReference type="HAMAP-Rule" id="MF_00087"/>
    </source>
</evidence>
<protein>
    <recommendedName>
        <fullName evidence="1">Glutamyl-tRNA reductase</fullName>
        <shortName evidence="1">GluTR</shortName>
        <ecNumber evidence="1">1.2.1.70</ecNumber>
    </recommendedName>
</protein>
<comment type="function">
    <text evidence="1">Catalyzes the NADPH-dependent reduction of glutamyl-tRNA(Glu) to glutamate 1-semialdehyde (GSA).</text>
</comment>
<comment type="catalytic activity">
    <reaction evidence="1">
        <text>(S)-4-amino-5-oxopentanoate + tRNA(Glu) + NADP(+) = L-glutamyl-tRNA(Glu) + NADPH + H(+)</text>
        <dbReference type="Rhea" id="RHEA:12344"/>
        <dbReference type="Rhea" id="RHEA-COMP:9663"/>
        <dbReference type="Rhea" id="RHEA-COMP:9680"/>
        <dbReference type="ChEBI" id="CHEBI:15378"/>
        <dbReference type="ChEBI" id="CHEBI:57501"/>
        <dbReference type="ChEBI" id="CHEBI:57783"/>
        <dbReference type="ChEBI" id="CHEBI:58349"/>
        <dbReference type="ChEBI" id="CHEBI:78442"/>
        <dbReference type="ChEBI" id="CHEBI:78520"/>
        <dbReference type="EC" id="1.2.1.70"/>
    </reaction>
</comment>
<comment type="pathway">
    <text evidence="1">Porphyrin-containing compound metabolism; protoporphyrin-IX biosynthesis; 5-aminolevulinate from L-glutamyl-tRNA(Glu): step 1/2.</text>
</comment>
<comment type="subunit">
    <text evidence="1">Homodimer.</text>
</comment>
<comment type="domain">
    <text evidence="1">Possesses an unusual extended V-shaped dimeric structure with each monomer consisting of three distinct domains arranged along a curved 'spinal' alpha-helix. The N-terminal catalytic domain specifically recognizes the glutamate moiety of the substrate. The second domain is the NADPH-binding domain, and the third C-terminal domain is responsible for dimerization.</text>
</comment>
<comment type="miscellaneous">
    <text evidence="1">During catalysis, the active site Cys acts as a nucleophile attacking the alpha-carbonyl group of tRNA-bound glutamate with the formation of a thioester intermediate between enzyme and glutamate, and the concomitant release of tRNA(Glu). The thioester intermediate is finally reduced by direct hydride transfer from NADPH, to form the product GSA.</text>
</comment>
<comment type="similarity">
    <text evidence="1">Belongs to the glutamyl-tRNA reductase family.</text>
</comment>
<keyword id="KW-0521">NADP</keyword>
<keyword id="KW-0560">Oxidoreductase</keyword>
<keyword id="KW-0627">Porphyrin biosynthesis</keyword>